<comment type="catalytic activity">
    <reaction evidence="1">
        <text>allantoate + H2O = (S)-ureidoglycolate + urea</text>
        <dbReference type="Rhea" id="RHEA:11016"/>
        <dbReference type="ChEBI" id="CHEBI:15377"/>
        <dbReference type="ChEBI" id="CHEBI:16199"/>
        <dbReference type="ChEBI" id="CHEBI:17536"/>
        <dbReference type="ChEBI" id="CHEBI:57296"/>
        <dbReference type="EC" id="3.5.3.4"/>
    </reaction>
</comment>
<comment type="pathway">
    <text evidence="1">Nitrogen metabolism; (S)-allantoin degradation; (S)-ureidoglycolate from allantoate (aminidohydrolase route): step 1/1.</text>
</comment>
<comment type="similarity">
    <text evidence="1">Belongs to the allantoicase family.</text>
</comment>
<name>ALLC_PSEFS</name>
<proteinExistence type="inferred from homology"/>
<gene>
    <name evidence="1" type="primary">alc</name>
    <name type="ordered locus">PFLU_4361</name>
</gene>
<feature type="chain" id="PRO_1000213025" description="Probable allantoicase">
    <location>
        <begin position="1"/>
        <end position="331"/>
    </location>
</feature>
<accession>C3K0A7</accession>
<dbReference type="EC" id="3.5.3.4" evidence="1"/>
<dbReference type="EMBL" id="AM181176">
    <property type="protein sequence ID" value="CAY50984.1"/>
    <property type="molecule type" value="Genomic_DNA"/>
</dbReference>
<dbReference type="RefSeq" id="WP_015885125.1">
    <property type="nucleotide sequence ID" value="NC_012660.1"/>
</dbReference>
<dbReference type="SMR" id="C3K0A7"/>
<dbReference type="STRING" id="294.SRM1_01781"/>
<dbReference type="eggNOG" id="COG4266">
    <property type="taxonomic scope" value="Bacteria"/>
</dbReference>
<dbReference type="HOGENOM" id="CLU_038797_1_2_6"/>
<dbReference type="OrthoDB" id="2078334at2"/>
<dbReference type="UniPathway" id="UPA00395">
    <property type="reaction ID" value="UER00654"/>
</dbReference>
<dbReference type="GO" id="GO:0004037">
    <property type="term" value="F:allantoicase activity"/>
    <property type="evidence" value="ECO:0007669"/>
    <property type="project" value="UniProtKB-UniRule"/>
</dbReference>
<dbReference type="GO" id="GO:0000256">
    <property type="term" value="P:allantoin catabolic process"/>
    <property type="evidence" value="ECO:0007669"/>
    <property type="project" value="UniProtKB-UniRule"/>
</dbReference>
<dbReference type="GO" id="GO:0006144">
    <property type="term" value="P:purine nucleobase metabolic process"/>
    <property type="evidence" value="ECO:0007669"/>
    <property type="project" value="UniProtKB-KW"/>
</dbReference>
<dbReference type="FunFam" id="2.60.120.260:FF:000059">
    <property type="entry name" value="Probable allantoicase"/>
    <property type="match status" value="1"/>
</dbReference>
<dbReference type="FunFam" id="2.60.120.260:FF:000090">
    <property type="entry name" value="Probable allantoicase"/>
    <property type="match status" value="1"/>
</dbReference>
<dbReference type="Gene3D" id="2.60.120.260">
    <property type="entry name" value="Galactose-binding domain-like"/>
    <property type="match status" value="2"/>
</dbReference>
<dbReference type="HAMAP" id="MF_00813">
    <property type="entry name" value="Allantoicase"/>
    <property type="match status" value="1"/>
</dbReference>
<dbReference type="InterPro" id="IPR005164">
    <property type="entry name" value="Allantoicase"/>
</dbReference>
<dbReference type="InterPro" id="IPR015908">
    <property type="entry name" value="Allantoicase_dom"/>
</dbReference>
<dbReference type="InterPro" id="IPR008979">
    <property type="entry name" value="Galactose-bd-like_sf"/>
</dbReference>
<dbReference type="NCBIfam" id="TIGR02961">
    <property type="entry name" value="allantoicase"/>
    <property type="match status" value="1"/>
</dbReference>
<dbReference type="PANTHER" id="PTHR12045">
    <property type="entry name" value="ALLANTOICASE"/>
    <property type="match status" value="1"/>
</dbReference>
<dbReference type="PANTHER" id="PTHR12045:SF3">
    <property type="entry name" value="INACTIVE ALLANTOICASE-RELATED"/>
    <property type="match status" value="1"/>
</dbReference>
<dbReference type="Pfam" id="PF03561">
    <property type="entry name" value="Allantoicase"/>
    <property type="match status" value="2"/>
</dbReference>
<dbReference type="PIRSF" id="PIRSF016516">
    <property type="entry name" value="Allantoicase"/>
    <property type="match status" value="1"/>
</dbReference>
<dbReference type="SUPFAM" id="SSF49785">
    <property type="entry name" value="Galactose-binding domain-like"/>
    <property type="match status" value="2"/>
</dbReference>
<organism>
    <name type="scientific">Pseudomonas fluorescens (strain SBW25)</name>
    <dbReference type="NCBI Taxonomy" id="216595"/>
    <lineage>
        <taxon>Bacteria</taxon>
        <taxon>Pseudomonadati</taxon>
        <taxon>Pseudomonadota</taxon>
        <taxon>Gammaproteobacteria</taxon>
        <taxon>Pseudomonadales</taxon>
        <taxon>Pseudomonadaceae</taxon>
        <taxon>Pseudomonas</taxon>
    </lineage>
</organism>
<protein>
    <recommendedName>
        <fullName evidence="1">Probable allantoicase</fullName>
        <ecNumber evidence="1">3.5.3.4</ecNumber>
    </recommendedName>
    <alternativeName>
        <fullName evidence="1">Allantoate amidinohydrolase</fullName>
    </alternativeName>
</protein>
<evidence type="ECO:0000255" key="1">
    <source>
        <dbReference type="HAMAP-Rule" id="MF_00813"/>
    </source>
</evidence>
<keyword id="KW-0378">Hydrolase</keyword>
<keyword id="KW-0659">Purine metabolism</keyword>
<reference key="1">
    <citation type="journal article" date="2009" name="Genome Biol.">
        <title>Genomic and genetic analyses of diversity and plant interactions of Pseudomonas fluorescens.</title>
        <authorList>
            <person name="Silby M.W."/>
            <person name="Cerdeno-Tarraga A.M."/>
            <person name="Vernikos G.S."/>
            <person name="Giddens S.R."/>
            <person name="Jackson R.W."/>
            <person name="Preston G.M."/>
            <person name="Zhang X.-X."/>
            <person name="Moon C.D."/>
            <person name="Gehrig S.M."/>
            <person name="Godfrey S.A.C."/>
            <person name="Knight C.G."/>
            <person name="Malone J.G."/>
            <person name="Robinson Z."/>
            <person name="Spiers A.J."/>
            <person name="Harris S."/>
            <person name="Challis G.L."/>
            <person name="Yaxley A.M."/>
            <person name="Harris D."/>
            <person name="Seeger K."/>
            <person name="Murphy L."/>
            <person name="Rutter S."/>
            <person name="Squares R."/>
            <person name="Quail M.A."/>
            <person name="Saunders E."/>
            <person name="Mavromatis K."/>
            <person name="Brettin T.S."/>
            <person name="Bentley S.D."/>
            <person name="Hothersall J."/>
            <person name="Stephens E."/>
            <person name="Thomas C.M."/>
            <person name="Parkhill J."/>
            <person name="Levy S.B."/>
            <person name="Rainey P.B."/>
            <person name="Thomson N.R."/>
        </authorList>
    </citation>
    <scope>NUCLEOTIDE SEQUENCE [LARGE SCALE GENOMIC DNA]</scope>
    <source>
        <strain>SBW25</strain>
    </source>
</reference>
<sequence length="331" mass="36709">MKAYAAPFEKFVNLADARLGTKIISVTDDWFADANRLFQPTPAVWKEGVFDDNGKWMDGWESRRKRFEGYDSAVIRLGVPGSIKGVDIDTSFFTGNYPPSASLEACFLASGEPDETTQWVEVLSAVELQGNSHHYHEINNDQAFSHLRFNIYPDGGVARLRVYGVPFRDWSSVGDNEQVDLAAALNGGRALACSDEHFGRMSNILNPGRGVNMGDGWETARRRTPGNDWVIVALGHPGEIEKIIVDTLHFKGNYPDTCSIQGAFVKGGTDSQIETQSLFWRELLPAQKLEMHAEHTFAEQIKALGPITHIRLNVFPDGGVSRLRVLGKVSK</sequence>